<feature type="chain" id="PRO_1000199031" description="Cysteine--tRNA ligase">
    <location>
        <begin position="1"/>
        <end position="481"/>
    </location>
</feature>
<feature type="short sequence motif" description="'HIGH' region">
    <location>
        <begin position="31"/>
        <end position="41"/>
    </location>
</feature>
<feature type="short sequence motif" description="'KMSKS' region">
    <location>
        <begin position="272"/>
        <end position="276"/>
    </location>
</feature>
<feature type="binding site" evidence="1">
    <location>
        <position position="29"/>
    </location>
    <ligand>
        <name>Zn(2+)</name>
        <dbReference type="ChEBI" id="CHEBI:29105"/>
    </ligand>
</feature>
<feature type="binding site" evidence="1">
    <location>
        <position position="210"/>
    </location>
    <ligand>
        <name>Zn(2+)</name>
        <dbReference type="ChEBI" id="CHEBI:29105"/>
    </ligand>
</feature>
<feature type="binding site" evidence="1">
    <location>
        <position position="235"/>
    </location>
    <ligand>
        <name>Zn(2+)</name>
        <dbReference type="ChEBI" id="CHEBI:29105"/>
    </ligand>
</feature>
<feature type="binding site" evidence="1">
    <location>
        <position position="239"/>
    </location>
    <ligand>
        <name>Zn(2+)</name>
        <dbReference type="ChEBI" id="CHEBI:29105"/>
    </ligand>
</feature>
<feature type="binding site" evidence="1">
    <location>
        <position position="275"/>
    </location>
    <ligand>
        <name>ATP</name>
        <dbReference type="ChEBI" id="CHEBI:30616"/>
    </ligand>
</feature>
<comment type="catalytic activity">
    <reaction evidence="1">
        <text>tRNA(Cys) + L-cysteine + ATP = L-cysteinyl-tRNA(Cys) + AMP + diphosphate</text>
        <dbReference type="Rhea" id="RHEA:17773"/>
        <dbReference type="Rhea" id="RHEA-COMP:9661"/>
        <dbReference type="Rhea" id="RHEA-COMP:9679"/>
        <dbReference type="ChEBI" id="CHEBI:30616"/>
        <dbReference type="ChEBI" id="CHEBI:33019"/>
        <dbReference type="ChEBI" id="CHEBI:35235"/>
        <dbReference type="ChEBI" id="CHEBI:78442"/>
        <dbReference type="ChEBI" id="CHEBI:78517"/>
        <dbReference type="ChEBI" id="CHEBI:456215"/>
        <dbReference type="EC" id="6.1.1.16"/>
    </reaction>
</comment>
<comment type="cofactor">
    <cofactor evidence="1">
        <name>Zn(2+)</name>
        <dbReference type="ChEBI" id="CHEBI:29105"/>
    </cofactor>
    <text evidence="1">Binds 1 zinc ion per subunit.</text>
</comment>
<comment type="subunit">
    <text evidence="1">Monomer.</text>
</comment>
<comment type="subcellular location">
    <subcellularLocation>
        <location evidence="1">Cytoplasm</location>
    </subcellularLocation>
</comment>
<comment type="similarity">
    <text evidence="1">Belongs to the class-I aminoacyl-tRNA synthetase family.</text>
</comment>
<sequence>MSIQVHDTLTAQKRELVPLEPGKLRLYVCGPTVYDYSHLGHARCYVVWDVVVRHLRARGLEVRFVRNFTDVDDKIIQRANERGEDPIALASRFADAFHEDMDALGNLRPDVEPRVSGHIPEIVALIARLVERGFAYAPGNGDVYYAVRKFPEYGRLSKRNLDDLIAGARVEPGEAKRDPLDFALWKAAKPGEPAWESPWGKGRPGWHIECSAMTQKHLGAPIDLHAGGKDLVFPHHTNEIAQSVAATSDGLHAEDFARYWMHNGFVQIDDEKMSKSLGNFFTIRDVLARFDGEALRFFLLGTHYRRDFNFSDQVLAEAERRLSALYETVEKAERLGAGAAPAAEPAFVERARAALDDDFNTPQVLGIVAEAFTEANALADRKGKKSSEEKARLAAFARGARAVGAVLGILDRPPAQALTAIRDRAAARRGIDGGEVERSIAERAAARAAKDFARSDAIRDALLARGVVLMDGPQGTTWKVE</sequence>
<reference key="1">
    <citation type="submission" date="2009-01" db="EMBL/GenBank/DDBJ databases">
        <title>Complete sequence of Anaeromyxobacter dehalogenans 2CP-1.</title>
        <authorList>
            <person name="Lucas S."/>
            <person name="Copeland A."/>
            <person name="Lapidus A."/>
            <person name="Glavina del Rio T."/>
            <person name="Dalin E."/>
            <person name="Tice H."/>
            <person name="Bruce D."/>
            <person name="Goodwin L."/>
            <person name="Pitluck S."/>
            <person name="Saunders E."/>
            <person name="Brettin T."/>
            <person name="Detter J.C."/>
            <person name="Han C."/>
            <person name="Larimer F."/>
            <person name="Land M."/>
            <person name="Hauser L."/>
            <person name="Kyrpides N."/>
            <person name="Ovchinnikova G."/>
            <person name="Beliaev A.S."/>
            <person name="Richardson P."/>
        </authorList>
    </citation>
    <scope>NUCLEOTIDE SEQUENCE [LARGE SCALE GENOMIC DNA]</scope>
    <source>
        <strain>2CP-1 / ATCC BAA-258</strain>
    </source>
</reference>
<proteinExistence type="inferred from homology"/>
<dbReference type="EC" id="6.1.1.16" evidence="1"/>
<dbReference type="EMBL" id="CP001359">
    <property type="protein sequence ID" value="ACL66020.1"/>
    <property type="molecule type" value="Genomic_DNA"/>
</dbReference>
<dbReference type="RefSeq" id="WP_012633793.1">
    <property type="nucleotide sequence ID" value="NC_011891.1"/>
</dbReference>
<dbReference type="SMR" id="B8JDH1"/>
<dbReference type="KEGG" id="acp:A2cp1_2683"/>
<dbReference type="HOGENOM" id="CLU_013528_0_1_7"/>
<dbReference type="Proteomes" id="UP000007089">
    <property type="component" value="Chromosome"/>
</dbReference>
<dbReference type="GO" id="GO:0005829">
    <property type="term" value="C:cytosol"/>
    <property type="evidence" value="ECO:0007669"/>
    <property type="project" value="TreeGrafter"/>
</dbReference>
<dbReference type="GO" id="GO:0005524">
    <property type="term" value="F:ATP binding"/>
    <property type="evidence" value="ECO:0007669"/>
    <property type="project" value="UniProtKB-UniRule"/>
</dbReference>
<dbReference type="GO" id="GO:0004817">
    <property type="term" value="F:cysteine-tRNA ligase activity"/>
    <property type="evidence" value="ECO:0007669"/>
    <property type="project" value="UniProtKB-UniRule"/>
</dbReference>
<dbReference type="GO" id="GO:0008270">
    <property type="term" value="F:zinc ion binding"/>
    <property type="evidence" value="ECO:0007669"/>
    <property type="project" value="UniProtKB-UniRule"/>
</dbReference>
<dbReference type="GO" id="GO:0006423">
    <property type="term" value="P:cysteinyl-tRNA aminoacylation"/>
    <property type="evidence" value="ECO:0007669"/>
    <property type="project" value="UniProtKB-UniRule"/>
</dbReference>
<dbReference type="CDD" id="cd00672">
    <property type="entry name" value="CysRS_core"/>
    <property type="match status" value="1"/>
</dbReference>
<dbReference type="FunFam" id="3.40.50.620:FF:000009">
    <property type="entry name" value="Cysteine--tRNA ligase"/>
    <property type="match status" value="1"/>
</dbReference>
<dbReference type="Gene3D" id="1.20.120.1910">
    <property type="entry name" value="Cysteine-tRNA ligase, C-terminal anti-codon recognition domain"/>
    <property type="match status" value="1"/>
</dbReference>
<dbReference type="Gene3D" id="3.40.50.620">
    <property type="entry name" value="HUPs"/>
    <property type="match status" value="1"/>
</dbReference>
<dbReference type="HAMAP" id="MF_00041">
    <property type="entry name" value="Cys_tRNA_synth"/>
    <property type="match status" value="1"/>
</dbReference>
<dbReference type="InterPro" id="IPR015803">
    <property type="entry name" value="Cys-tRNA-ligase"/>
</dbReference>
<dbReference type="InterPro" id="IPR015273">
    <property type="entry name" value="Cys-tRNA-synt_Ia_DALR"/>
</dbReference>
<dbReference type="InterPro" id="IPR024909">
    <property type="entry name" value="Cys-tRNA/MSH_ligase"/>
</dbReference>
<dbReference type="InterPro" id="IPR056411">
    <property type="entry name" value="CysS_C"/>
</dbReference>
<dbReference type="InterPro" id="IPR014729">
    <property type="entry name" value="Rossmann-like_a/b/a_fold"/>
</dbReference>
<dbReference type="InterPro" id="IPR032678">
    <property type="entry name" value="tRNA-synt_1_cat_dom"/>
</dbReference>
<dbReference type="InterPro" id="IPR009080">
    <property type="entry name" value="tRNAsynth_Ia_anticodon-bd"/>
</dbReference>
<dbReference type="NCBIfam" id="TIGR00435">
    <property type="entry name" value="cysS"/>
    <property type="match status" value="1"/>
</dbReference>
<dbReference type="PANTHER" id="PTHR10890:SF3">
    <property type="entry name" value="CYSTEINE--TRNA LIGASE, CYTOPLASMIC"/>
    <property type="match status" value="1"/>
</dbReference>
<dbReference type="PANTHER" id="PTHR10890">
    <property type="entry name" value="CYSTEINYL-TRNA SYNTHETASE"/>
    <property type="match status" value="1"/>
</dbReference>
<dbReference type="Pfam" id="PF23493">
    <property type="entry name" value="CysS_C"/>
    <property type="match status" value="1"/>
</dbReference>
<dbReference type="Pfam" id="PF09190">
    <property type="entry name" value="DALR_2"/>
    <property type="match status" value="1"/>
</dbReference>
<dbReference type="Pfam" id="PF01406">
    <property type="entry name" value="tRNA-synt_1e"/>
    <property type="match status" value="1"/>
</dbReference>
<dbReference type="PRINTS" id="PR00983">
    <property type="entry name" value="TRNASYNTHCYS"/>
</dbReference>
<dbReference type="SMART" id="SM00840">
    <property type="entry name" value="DALR_2"/>
    <property type="match status" value="1"/>
</dbReference>
<dbReference type="SUPFAM" id="SSF47323">
    <property type="entry name" value="Anticodon-binding domain of a subclass of class I aminoacyl-tRNA synthetases"/>
    <property type="match status" value="1"/>
</dbReference>
<dbReference type="SUPFAM" id="SSF52374">
    <property type="entry name" value="Nucleotidylyl transferase"/>
    <property type="match status" value="1"/>
</dbReference>
<keyword id="KW-0030">Aminoacyl-tRNA synthetase</keyword>
<keyword id="KW-0067">ATP-binding</keyword>
<keyword id="KW-0963">Cytoplasm</keyword>
<keyword id="KW-0436">Ligase</keyword>
<keyword id="KW-0479">Metal-binding</keyword>
<keyword id="KW-0547">Nucleotide-binding</keyword>
<keyword id="KW-0648">Protein biosynthesis</keyword>
<keyword id="KW-0862">Zinc</keyword>
<name>SYC_ANAD2</name>
<organism>
    <name type="scientific">Anaeromyxobacter dehalogenans (strain 2CP-1 / ATCC BAA-258)</name>
    <dbReference type="NCBI Taxonomy" id="455488"/>
    <lineage>
        <taxon>Bacteria</taxon>
        <taxon>Pseudomonadati</taxon>
        <taxon>Myxococcota</taxon>
        <taxon>Myxococcia</taxon>
        <taxon>Myxococcales</taxon>
        <taxon>Cystobacterineae</taxon>
        <taxon>Anaeromyxobacteraceae</taxon>
        <taxon>Anaeromyxobacter</taxon>
    </lineage>
</organism>
<accession>B8JDH1</accession>
<evidence type="ECO:0000255" key="1">
    <source>
        <dbReference type="HAMAP-Rule" id="MF_00041"/>
    </source>
</evidence>
<gene>
    <name evidence="1" type="primary">cysS</name>
    <name type="ordered locus">A2cp1_2683</name>
</gene>
<protein>
    <recommendedName>
        <fullName evidence="1">Cysteine--tRNA ligase</fullName>
        <ecNumber evidence="1">6.1.1.16</ecNumber>
    </recommendedName>
    <alternativeName>
        <fullName evidence="1">Cysteinyl-tRNA synthetase</fullName>
        <shortName evidence="1">CysRS</shortName>
    </alternativeName>
</protein>